<accession>C3KED7</accession>
<proteinExistence type="inferred from homology"/>
<protein>
    <recommendedName>
        <fullName evidence="1">Phosphoribosylaminoimidazole-succinocarboxamide synthase</fullName>
        <ecNumber evidence="1">6.3.2.6</ecNumber>
    </recommendedName>
    <alternativeName>
        <fullName evidence="1">SAICAR synthetase</fullName>
    </alternativeName>
</protein>
<dbReference type="EC" id="6.3.2.6" evidence="1"/>
<dbReference type="EMBL" id="AM181176">
    <property type="protein sequence ID" value="CAY47731.1"/>
    <property type="molecule type" value="Genomic_DNA"/>
</dbReference>
<dbReference type="RefSeq" id="WP_010212191.1">
    <property type="nucleotide sequence ID" value="NC_012660.1"/>
</dbReference>
<dbReference type="SMR" id="C3KED7"/>
<dbReference type="STRING" id="294.SRM1_01364"/>
<dbReference type="GeneID" id="97922965"/>
<dbReference type="eggNOG" id="COG0152">
    <property type="taxonomic scope" value="Bacteria"/>
</dbReference>
<dbReference type="HOGENOM" id="CLU_061495_2_0_6"/>
<dbReference type="OrthoDB" id="9801549at2"/>
<dbReference type="UniPathway" id="UPA00074">
    <property type="reaction ID" value="UER00131"/>
</dbReference>
<dbReference type="GO" id="GO:0005829">
    <property type="term" value="C:cytosol"/>
    <property type="evidence" value="ECO:0007669"/>
    <property type="project" value="TreeGrafter"/>
</dbReference>
<dbReference type="GO" id="GO:0005524">
    <property type="term" value="F:ATP binding"/>
    <property type="evidence" value="ECO:0007669"/>
    <property type="project" value="UniProtKB-KW"/>
</dbReference>
<dbReference type="GO" id="GO:0004639">
    <property type="term" value="F:phosphoribosylaminoimidazolesuccinocarboxamide synthase activity"/>
    <property type="evidence" value="ECO:0007669"/>
    <property type="project" value="UniProtKB-UniRule"/>
</dbReference>
<dbReference type="GO" id="GO:0006189">
    <property type="term" value="P:'de novo' IMP biosynthetic process"/>
    <property type="evidence" value="ECO:0007669"/>
    <property type="project" value="UniProtKB-UniRule"/>
</dbReference>
<dbReference type="GO" id="GO:0009236">
    <property type="term" value="P:cobalamin biosynthetic process"/>
    <property type="evidence" value="ECO:0007669"/>
    <property type="project" value="InterPro"/>
</dbReference>
<dbReference type="CDD" id="cd01415">
    <property type="entry name" value="SAICAR_synt_PurC"/>
    <property type="match status" value="1"/>
</dbReference>
<dbReference type="FunFam" id="3.30.200.20:FF:000086">
    <property type="entry name" value="Phosphoribosylaminoimidazole-succinocarboxamide synthase"/>
    <property type="match status" value="1"/>
</dbReference>
<dbReference type="FunFam" id="3.30.470.20:FF:000006">
    <property type="entry name" value="Phosphoribosylaminoimidazole-succinocarboxamide synthase"/>
    <property type="match status" value="1"/>
</dbReference>
<dbReference type="Gene3D" id="3.30.470.20">
    <property type="entry name" value="ATP-grasp fold, B domain"/>
    <property type="match status" value="1"/>
</dbReference>
<dbReference type="Gene3D" id="3.30.200.20">
    <property type="entry name" value="Phosphorylase Kinase, domain 1"/>
    <property type="match status" value="1"/>
</dbReference>
<dbReference type="HAMAP" id="MF_00137">
    <property type="entry name" value="SAICAR_synth"/>
    <property type="match status" value="1"/>
</dbReference>
<dbReference type="InterPro" id="IPR028923">
    <property type="entry name" value="SAICAR_synt/ADE2_N"/>
</dbReference>
<dbReference type="InterPro" id="IPR033934">
    <property type="entry name" value="SAICAR_synt_PurC"/>
</dbReference>
<dbReference type="InterPro" id="IPR001636">
    <property type="entry name" value="SAICAR_synth"/>
</dbReference>
<dbReference type="InterPro" id="IPR050089">
    <property type="entry name" value="SAICAR_synthetase"/>
</dbReference>
<dbReference type="InterPro" id="IPR018236">
    <property type="entry name" value="SAICAR_synthetase_CS"/>
</dbReference>
<dbReference type="NCBIfam" id="TIGR00081">
    <property type="entry name" value="purC"/>
    <property type="match status" value="1"/>
</dbReference>
<dbReference type="PANTHER" id="PTHR43599">
    <property type="entry name" value="MULTIFUNCTIONAL PROTEIN ADE2"/>
    <property type="match status" value="1"/>
</dbReference>
<dbReference type="PANTHER" id="PTHR43599:SF3">
    <property type="entry name" value="SI:DKEY-6E2.2"/>
    <property type="match status" value="1"/>
</dbReference>
<dbReference type="Pfam" id="PF01259">
    <property type="entry name" value="SAICAR_synt"/>
    <property type="match status" value="1"/>
</dbReference>
<dbReference type="SUPFAM" id="SSF56104">
    <property type="entry name" value="SAICAR synthase-like"/>
    <property type="match status" value="1"/>
</dbReference>
<dbReference type="PROSITE" id="PS01057">
    <property type="entry name" value="SAICAR_SYNTHETASE_1"/>
    <property type="match status" value="1"/>
</dbReference>
<dbReference type="PROSITE" id="PS01058">
    <property type="entry name" value="SAICAR_SYNTHETASE_2"/>
    <property type="match status" value="1"/>
</dbReference>
<gene>
    <name evidence="1" type="primary">purC</name>
    <name type="ordered locus">PFLU_1480</name>
</gene>
<reference key="1">
    <citation type="journal article" date="2009" name="Genome Biol.">
        <title>Genomic and genetic analyses of diversity and plant interactions of Pseudomonas fluorescens.</title>
        <authorList>
            <person name="Silby M.W."/>
            <person name="Cerdeno-Tarraga A.M."/>
            <person name="Vernikos G.S."/>
            <person name="Giddens S.R."/>
            <person name="Jackson R.W."/>
            <person name="Preston G.M."/>
            <person name="Zhang X.-X."/>
            <person name="Moon C.D."/>
            <person name="Gehrig S.M."/>
            <person name="Godfrey S.A.C."/>
            <person name="Knight C.G."/>
            <person name="Malone J.G."/>
            <person name="Robinson Z."/>
            <person name="Spiers A.J."/>
            <person name="Harris S."/>
            <person name="Challis G.L."/>
            <person name="Yaxley A.M."/>
            <person name="Harris D."/>
            <person name="Seeger K."/>
            <person name="Murphy L."/>
            <person name="Rutter S."/>
            <person name="Squares R."/>
            <person name="Quail M.A."/>
            <person name="Saunders E."/>
            <person name="Mavromatis K."/>
            <person name="Brettin T.S."/>
            <person name="Bentley S.D."/>
            <person name="Hothersall J."/>
            <person name="Stephens E."/>
            <person name="Thomas C.M."/>
            <person name="Parkhill J."/>
            <person name="Levy S.B."/>
            <person name="Rainey P.B."/>
            <person name="Thomson N.R."/>
        </authorList>
    </citation>
    <scope>NUCLEOTIDE SEQUENCE [LARGE SCALE GENOMIC DNA]</scope>
    <source>
        <strain>SBW25</strain>
    </source>
</reference>
<feature type="chain" id="PRO_1000203236" description="Phosphoribosylaminoimidazole-succinocarboxamide synthase">
    <location>
        <begin position="1"/>
        <end position="237"/>
    </location>
</feature>
<keyword id="KW-0067">ATP-binding</keyword>
<keyword id="KW-0436">Ligase</keyword>
<keyword id="KW-0547">Nucleotide-binding</keyword>
<keyword id="KW-0658">Purine biosynthesis</keyword>
<name>PUR7_PSEFS</name>
<comment type="catalytic activity">
    <reaction evidence="1">
        <text>5-amino-1-(5-phospho-D-ribosyl)imidazole-4-carboxylate + L-aspartate + ATP = (2S)-2-[5-amino-1-(5-phospho-beta-D-ribosyl)imidazole-4-carboxamido]succinate + ADP + phosphate + 2 H(+)</text>
        <dbReference type="Rhea" id="RHEA:22628"/>
        <dbReference type="ChEBI" id="CHEBI:15378"/>
        <dbReference type="ChEBI" id="CHEBI:29991"/>
        <dbReference type="ChEBI" id="CHEBI:30616"/>
        <dbReference type="ChEBI" id="CHEBI:43474"/>
        <dbReference type="ChEBI" id="CHEBI:58443"/>
        <dbReference type="ChEBI" id="CHEBI:77657"/>
        <dbReference type="ChEBI" id="CHEBI:456216"/>
        <dbReference type="EC" id="6.3.2.6"/>
    </reaction>
</comment>
<comment type="pathway">
    <text evidence="1">Purine metabolism; IMP biosynthesis via de novo pathway; 5-amino-1-(5-phospho-D-ribosyl)imidazole-4-carboxamide from 5-amino-1-(5-phospho-D-ribosyl)imidazole-4-carboxylate: step 1/2.</text>
</comment>
<comment type="similarity">
    <text evidence="1">Belongs to the SAICAR synthetase family.</text>
</comment>
<sequence>MEKREELYRGKAKSVYKTDDANRLILLFRNDTSAFDGKRIEQLDRKGMVNNKFNAFIMQKLEAAGIPTQFDKLLGDNECLVKKLDMIPVECVVRNYAAGSLVKRLGVEEGLKLNPYTFELFLKDDAKGDPFINESHVVAFGWGTAEQLARMKELSLKVNDVLSKLFDDAGLLLVDFKLEFGVFHDGSIVLGDEFSPDGCRLWDKDTKKKMDKDRFRQGLGDVIEAYEEVANRLGVPL</sequence>
<evidence type="ECO:0000255" key="1">
    <source>
        <dbReference type="HAMAP-Rule" id="MF_00137"/>
    </source>
</evidence>
<organism>
    <name type="scientific">Pseudomonas fluorescens (strain SBW25)</name>
    <dbReference type="NCBI Taxonomy" id="216595"/>
    <lineage>
        <taxon>Bacteria</taxon>
        <taxon>Pseudomonadati</taxon>
        <taxon>Pseudomonadota</taxon>
        <taxon>Gammaproteobacteria</taxon>
        <taxon>Pseudomonadales</taxon>
        <taxon>Pseudomonadaceae</taxon>
        <taxon>Pseudomonas</taxon>
    </lineage>
</organism>